<organism>
    <name type="scientific">Yersinia pestis bv. Antiqua (strain Nepal516)</name>
    <dbReference type="NCBI Taxonomy" id="377628"/>
    <lineage>
        <taxon>Bacteria</taxon>
        <taxon>Pseudomonadati</taxon>
        <taxon>Pseudomonadota</taxon>
        <taxon>Gammaproteobacteria</taxon>
        <taxon>Enterobacterales</taxon>
        <taxon>Yersiniaceae</taxon>
        <taxon>Yersinia</taxon>
    </lineage>
</organism>
<feature type="chain" id="PRO_1000064438" description="Der GTPase-activating protein YihI">
    <location>
        <begin position="1"/>
        <end position="188"/>
    </location>
</feature>
<feature type="region of interest" description="Disordered" evidence="2">
    <location>
        <begin position="1"/>
        <end position="80"/>
    </location>
</feature>
<feature type="region of interest" description="Disordered" evidence="2">
    <location>
        <begin position="162"/>
        <end position="188"/>
    </location>
</feature>
<feature type="compositionally biased region" description="Basic and acidic residues" evidence="2">
    <location>
        <begin position="27"/>
        <end position="37"/>
    </location>
</feature>
<feature type="compositionally biased region" description="Polar residues" evidence="2">
    <location>
        <begin position="47"/>
        <end position="57"/>
    </location>
</feature>
<evidence type="ECO:0000255" key="1">
    <source>
        <dbReference type="HAMAP-Rule" id="MF_01058"/>
    </source>
</evidence>
<evidence type="ECO:0000256" key="2">
    <source>
        <dbReference type="SAM" id="MobiDB-lite"/>
    </source>
</evidence>
<name>YIHI_YERPN</name>
<proteinExistence type="inferred from homology"/>
<gene>
    <name evidence="1" type="primary">yihI</name>
    <name type="ordered locus">YPN_0247</name>
    <name type="ORF">YP516_0238</name>
</gene>
<keyword id="KW-0343">GTPase activation</keyword>
<keyword id="KW-0690">Ribosome biogenesis</keyword>
<reference key="1">
    <citation type="journal article" date="2006" name="J. Bacteriol.">
        <title>Complete genome sequence of Yersinia pestis strains Antiqua and Nepal516: evidence of gene reduction in an emerging pathogen.</title>
        <authorList>
            <person name="Chain P.S.G."/>
            <person name="Hu P."/>
            <person name="Malfatti S.A."/>
            <person name="Radnedge L."/>
            <person name="Larimer F."/>
            <person name="Vergez L.M."/>
            <person name="Worsham P."/>
            <person name="Chu M.C."/>
            <person name="Andersen G.L."/>
        </authorList>
    </citation>
    <scope>NUCLEOTIDE SEQUENCE [LARGE SCALE GENOMIC DNA]</scope>
    <source>
        <strain>Nepal516</strain>
    </source>
</reference>
<reference key="2">
    <citation type="submission" date="2009-04" db="EMBL/GenBank/DDBJ databases">
        <title>Yersinia pestis Nepal516A whole genome shotgun sequencing project.</title>
        <authorList>
            <person name="Plunkett G. III"/>
            <person name="Anderson B.D."/>
            <person name="Baumler D.J."/>
            <person name="Burland V."/>
            <person name="Cabot E.L."/>
            <person name="Glasner J.D."/>
            <person name="Mau B."/>
            <person name="Neeno-Eckwall E."/>
            <person name="Perna N.T."/>
            <person name="Munk A.C."/>
            <person name="Tapia R."/>
            <person name="Green L.D."/>
            <person name="Rogers Y.C."/>
            <person name="Detter J.C."/>
            <person name="Bruce D.C."/>
            <person name="Brettin T.S."/>
        </authorList>
    </citation>
    <scope>NUCLEOTIDE SEQUENCE [LARGE SCALE GENOMIC DNA]</scope>
    <source>
        <strain>Nepal516</strain>
    </source>
</reference>
<protein>
    <recommendedName>
        <fullName evidence="1">Der GTPase-activating protein YihI</fullName>
    </recommendedName>
</protein>
<accession>Q1CN50</accession>
<accession>C4GPM6</accession>
<sequence>MKQPNKAPRANIAAPKGTATPKRRRKTRDELDAEARDRKRQKKHSGNRSGARTNVEGSNKKGHSQTQEKDPRVGSKVPVPLVIESQVKAKSMPKPVEKNVVKPRLTPEEELAKLENDERLDALLDRLDNDEVLNKEDQAYVDLTLDRIDALMEQLGIELGDDEDDVEREEKQEDILQLLKRGNPKDTF</sequence>
<dbReference type="EMBL" id="CP000305">
    <property type="protein sequence ID" value="ABG16580.1"/>
    <property type="molecule type" value="Genomic_DNA"/>
</dbReference>
<dbReference type="EMBL" id="ACNQ01000006">
    <property type="protein sequence ID" value="EEO78026.1"/>
    <property type="molecule type" value="Genomic_DNA"/>
</dbReference>
<dbReference type="RefSeq" id="WP_002213158.1">
    <property type="nucleotide sequence ID" value="NZ_ACNQ01000006.1"/>
</dbReference>
<dbReference type="SMR" id="Q1CN50"/>
<dbReference type="GeneID" id="57974569"/>
<dbReference type="KEGG" id="ypn:YPN_0247"/>
<dbReference type="HOGENOM" id="CLU_094104_2_0_6"/>
<dbReference type="Proteomes" id="UP000008936">
    <property type="component" value="Chromosome"/>
</dbReference>
<dbReference type="GO" id="GO:0005096">
    <property type="term" value="F:GTPase activator activity"/>
    <property type="evidence" value="ECO:0007669"/>
    <property type="project" value="UniProtKB-KW"/>
</dbReference>
<dbReference type="GO" id="GO:0042254">
    <property type="term" value="P:ribosome biogenesis"/>
    <property type="evidence" value="ECO:0007669"/>
    <property type="project" value="UniProtKB-KW"/>
</dbReference>
<dbReference type="HAMAP" id="MF_01058">
    <property type="entry name" value="GAP_YihI"/>
    <property type="match status" value="1"/>
</dbReference>
<dbReference type="InterPro" id="IPR007336">
    <property type="entry name" value="YihI"/>
</dbReference>
<dbReference type="NCBIfam" id="NF003560">
    <property type="entry name" value="PRK05244.1-1"/>
    <property type="match status" value="1"/>
</dbReference>
<dbReference type="Pfam" id="PF04220">
    <property type="entry name" value="YihI"/>
    <property type="match status" value="1"/>
</dbReference>
<comment type="function">
    <text evidence="1">A GTPase-activating protein (GAP) that modifies Der/EngA GTPase function. May play a role in ribosome biogenesis.</text>
</comment>
<comment type="subunit">
    <text evidence="1">Interacts with Der.</text>
</comment>
<comment type="similarity">
    <text evidence="1">Belongs to the YihI family.</text>
</comment>